<comment type="function">
    <text evidence="1">NDH shuttles electrons from NAD(P)H:plastoquinone, via FMN and iron-sulfur (Fe-S) centers, to quinones in the photosynthetic chain and possibly in a chloroplast respiratory chain. The immediate electron acceptor for the enzyme in this species is believed to be plastoquinone. Couples the redox reaction to proton translocation, and thus conserves the redox energy in a proton gradient.</text>
</comment>
<comment type="catalytic activity">
    <reaction evidence="1">
        <text>a plastoquinone + NADH + (n+1) H(+)(in) = a plastoquinol + NAD(+) + n H(+)(out)</text>
        <dbReference type="Rhea" id="RHEA:42608"/>
        <dbReference type="Rhea" id="RHEA-COMP:9561"/>
        <dbReference type="Rhea" id="RHEA-COMP:9562"/>
        <dbReference type="ChEBI" id="CHEBI:15378"/>
        <dbReference type="ChEBI" id="CHEBI:17757"/>
        <dbReference type="ChEBI" id="CHEBI:57540"/>
        <dbReference type="ChEBI" id="CHEBI:57945"/>
        <dbReference type="ChEBI" id="CHEBI:62192"/>
    </reaction>
</comment>
<comment type="catalytic activity">
    <reaction evidence="1">
        <text>a plastoquinone + NADPH + (n+1) H(+)(in) = a plastoquinol + NADP(+) + n H(+)(out)</text>
        <dbReference type="Rhea" id="RHEA:42612"/>
        <dbReference type="Rhea" id="RHEA-COMP:9561"/>
        <dbReference type="Rhea" id="RHEA-COMP:9562"/>
        <dbReference type="ChEBI" id="CHEBI:15378"/>
        <dbReference type="ChEBI" id="CHEBI:17757"/>
        <dbReference type="ChEBI" id="CHEBI:57783"/>
        <dbReference type="ChEBI" id="CHEBI:58349"/>
        <dbReference type="ChEBI" id="CHEBI:62192"/>
    </reaction>
</comment>
<comment type="subunit">
    <text evidence="1">NDH is composed of at least 16 different subunits, 5 of which are encoded in the nucleus.</text>
</comment>
<comment type="subcellular location">
    <subcellularLocation>
        <location evidence="1">Plastid</location>
        <location evidence="1">Chloroplast thylakoid membrane</location>
        <topology evidence="1">Multi-pass membrane protein</topology>
    </subcellularLocation>
</comment>
<comment type="similarity">
    <text evidence="1">Belongs to the complex I subunit 4L family.</text>
</comment>
<organism>
    <name type="scientific">Staurastrum punctulatum</name>
    <name type="common">Green alga</name>
    <name type="synonym">Cosmoastrum punctulatum</name>
    <dbReference type="NCBI Taxonomy" id="102822"/>
    <lineage>
        <taxon>Eukaryota</taxon>
        <taxon>Viridiplantae</taxon>
        <taxon>Streptophyta</taxon>
        <taxon>Zygnematophyceae</taxon>
        <taxon>Zygnematophycidae</taxon>
        <taxon>Desmidiales</taxon>
        <taxon>Desmidiaceae</taxon>
        <taxon>Staurastrum</taxon>
    </lineage>
</organism>
<feature type="chain" id="PRO_0000360368" description="NAD(P)H-quinone oxidoreductase subunit 4L, chloroplastic">
    <location>
        <begin position="1"/>
        <end position="100"/>
    </location>
</feature>
<feature type="transmembrane region" description="Helical" evidence="1">
    <location>
        <begin position="1"/>
        <end position="21"/>
    </location>
</feature>
<feature type="transmembrane region" description="Helical" evidence="1">
    <location>
        <begin position="30"/>
        <end position="50"/>
    </location>
</feature>
<feature type="transmembrane region" description="Helical" evidence="1">
    <location>
        <begin position="60"/>
        <end position="80"/>
    </location>
</feature>
<accession>Q32S05</accession>
<name>NU4LC_STAPU</name>
<geneLocation type="chloroplast"/>
<evidence type="ECO:0000255" key="1">
    <source>
        <dbReference type="HAMAP-Rule" id="MF_01456"/>
    </source>
</evidence>
<dbReference type="EC" id="7.1.1.-" evidence="1"/>
<dbReference type="EMBL" id="AY958085">
    <property type="protein sequence ID" value="AAX45701.1"/>
    <property type="molecule type" value="Genomic_DNA"/>
</dbReference>
<dbReference type="RefSeq" id="YP_636371.1">
    <property type="nucleotide sequence ID" value="NC_008116.1"/>
</dbReference>
<dbReference type="SMR" id="Q32S05"/>
<dbReference type="GeneID" id="4108664"/>
<dbReference type="GO" id="GO:0009535">
    <property type="term" value="C:chloroplast thylakoid membrane"/>
    <property type="evidence" value="ECO:0007669"/>
    <property type="project" value="UniProtKB-SubCell"/>
</dbReference>
<dbReference type="GO" id="GO:0030964">
    <property type="term" value="C:NADH dehydrogenase complex"/>
    <property type="evidence" value="ECO:0007669"/>
    <property type="project" value="TreeGrafter"/>
</dbReference>
<dbReference type="GO" id="GO:0016655">
    <property type="term" value="F:oxidoreductase activity, acting on NAD(P)H, quinone or similar compound as acceptor"/>
    <property type="evidence" value="ECO:0007669"/>
    <property type="project" value="UniProtKB-UniRule"/>
</dbReference>
<dbReference type="GO" id="GO:0048038">
    <property type="term" value="F:quinone binding"/>
    <property type="evidence" value="ECO:0007669"/>
    <property type="project" value="UniProtKB-KW"/>
</dbReference>
<dbReference type="GO" id="GO:0042773">
    <property type="term" value="P:ATP synthesis coupled electron transport"/>
    <property type="evidence" value="ECO:0007669"/>
    <property type="project" value="InterPro"/>
</dbReference>
<dbReference type="GO" id="GO:0019684">
    <property type="term" value="P:photosynthesis, light reaction"/>
    <property type="evidence" value="ECO:0007669"/>
    <property type="project" value="UniProtKB-UniRule"/>
</dbReference>
<dbReference type="FunFam" id="1.10.287.3510:FF:000001">
    <property type="entry name" value="NADH-quinone oxidoreductase subunit K"/>
    <property type="match status" value="1"/>
</dbReference>
<dbReference type="Gene3D" id="1.10.287.3510">
    <property type="match status" value="1"/>
</dbReference>
<dbReference type="HAMAP" id="MF_01456">
    <property type="entry name" value="NDH1_NuoK"/>
    <property type="match status" value="1"/>
</dbReference>
<dbReference type="InterPro" id="IPR001133">
    <property type="entry name" value="NADH_UbQ_OxRdtase_chain4L/K"/>
</dbReference>
<dbReference type="InterPro" id="IPR039428">
    <property type="entry name" value="NUOK/Mnh_C1-like"/>
</dbReference>
<dbReference type="NCBIfam" id="NF004320">
    <property type="entry name" value="PRK05715.1-2"/>
    <property type="match status" value="1"/>
</dbReference>
<dbReference type="NCBIfam" id="NF004321">
    <property type="entry name" value="PRK05715.1-3"/>
    <property type="match status" value="1"/>
</dbReference>
<dbReference type="NCBIfam" id="NF004322">
    <property type="entry name" value="PRK05715.1-4"/>
    <property type="match status" value="1"/>
</dbReference>
<dbReference type="NCBIfam" id="NF004323">
    <property type="entry name" value="PRK05715.1-5"/>
    <property type="match status" value="1"/>
</dbReference>
<dbReference type="PANTHER" id="PTHR11434:SF16">
    <property type="entry name" value="NADH-UBIQUINONE OXIDOREDUCTASE CHAIN 4L"/>
    <property type="match status" value="1"/>
</dbReference>
<dbReference type="PANTHER" id="PTHR11434">
    <property type="entry name" value="NADH-UBIQUINONE OXIDOREDUCTASE SUBUNIT ND4L"/>
    <property type="match status" value="1"/>
</dbReference>
<dbReference type="Pfam" id="PF00420">
    <property type="entry name" value="Oxidored_q2"/>
    <property type="match status" value="1"/>
</dbReference>
<sequence>MLENSLILGAYLFCLGIYGLTTSRNMIRALMCLELMLNGVNINLVAFSSFLDPDKIRGQVFAIFIIAIAAAEAAIGLAIILNIFRNRNSIRIDQFNLLKW</sequence>
<protein>
    <recommendedName>
        <fullName evidence="1">NAD(P)H-quinone oxidoreductase subunit 4L, chloroplastic</fullName>
        <ecNumber evidence="1">7.1.1.-</ecNumber>
    </recommendedName>
    <alternativeName>
        <fullName evidence="1">NAD(P)H dehydrogenase subunit 4L</fullName>
    </alternativeName>
    <alternativeName>
        <fullName evidence="1">NADH-plastoquinone oxidoreductase subunit 4L</fullName>
    </alternativeName>
</protein>
<keyword id="KW-0150">Chloroplast</keyword>
<keyword id="KW-0472">Membrane</keyword>
<keyword id="KW-0520">NAD</keyword>
<keyword id="KW-0521">NADP</keyword>
<keyword id="KW-0934">Plastid</keyword>
<keyword id="KW-0618">Plastoquinone</keyword>
<keyword id="KW-0874">Quinone</keyword>
<keyword id="KW-0793">Thylakoid</keyword>
<keyword id="KW-1278">Translocase</keyword>
<keyword id="KW-0812">Transmembrane</keyword>
<keyword id="KW-1133">Transmembrane helix</keyword>
<keyword id="KW-0813">Transport</keyword>
<reference key="1">
    <citation type="journal article" date="2005" name="BMC Biol.">
        <title>The complete chloroplast DNA sequences of the charophycean green algae Staurastrum and Zygnema reveal that the chloroplast genome underwent extensive changes during the evolution of the Zygnematales.</title>
        <authorList>
            <person name="Turmel M."/>
            <person name="Otis C."/>
            <person name="Lemieux C."/>
        </authorList>
    </citation>
    <scope>NUCLEOTIDE SEQUENCE [LARGE SCALE GENOMIC DNA]</scope>
</reference>
<gene>
    <name evidence="1" type="primary">ndhE</name>
</gene>
<proteinExistence type="inferred from homology"/>